<protein>
    <recommendedName>
        <fullName evidence="1">Endonuclease V</fullName>
        <ecNumber evidence="1">3.1.21.7</ecNumber>
    </recommendedName>
    <alternativeName>
        <fullName evidence="1">Deoxyinosine 3'endonuclease</fullName>
    </alternativeName>
    <alternativeName>
        <fullName evidence="1">Deoxyribonuclease V</fullName>
        <shortName evidence="1">DNase V</shortName>
    </alternativeName>
</protein>
<comment type="function">
    <text evidence="1">DNA repair enzyme involved in the repair of deaminated bases. Selectively cleaves double-stranded DNA at the second phosphodiester bond 3' to a deoxyinosine leaving behind the intact lesion on the nicked DNA.</text>
</comment>
<comment type="catalytic activity">
    <reaction evidence="1">
        <text>Endonucleolytic cleavage at apurinic or apyrimidinic sites to products with a 5'-phosphate.</text>
        <dbReference type="EC" id="3.1.21.7"/>
    </reaction>
</comment>
<comment type="cofactor">
    <cofactor evidence="1">
        <name>Mg(2+)</name>
        <dbReference type="ChEBI" id="CHEBI:18420"/>
    </cofactor>
</comment>
<comment type="subcellular location">
    <subcellularLocation>
        <location evidence="1">Cytoplasm</location>
    </subcellularLocation>
</comment>
<comment type="similarity">
    <text evidence="1">Belongs to the endonuclease V family.</text>
</comment>
<dbReference type="EC" id="3.1.21.7" evidence="1"/>
<dbReference type="EMBL" id="CP000716">
    <property type="protein sequence ID" value="ABR31407.1"/>
    <property type="molecule type" value="Genomic_DNA"/>
</dbReference>
<dbReference type="RefSeq" id="WP_012057766.1">
    <property type="nucleotide sequence ID" value="NC_009616.1"/>
</dbReference>
<dbReference type="SMR" id="A6LNA6"/>
<dbReference type="STRING" id="391009.Tmel_1562"/>
<dbReference type="KEGG" id="tme:Tmel_1562"/>
<dbReference type="eggNOG" id="COG1515">
    <property type="taxonomic scope" value="Bacteria"/>
</dbReference>
<dbReference type="HOGENOM" id="CLU_047631_1_1_0"/>
<dbReference type="OrthoDB" id="9790916at2"/>
<dbReference type="Proteomes" id="UP000001110">
    <property type="component" value="Chromosome"/>
</dbReference>
<dbReference type="GO" id="GO:0005737">
    <property type="term" value="C:cytoplasm"/>
    <property type="evidence" value="ECO:0007669"/>
    <property type="project" value="UniProtKB-SubCell"/>
</dbReference>
<dbReference type="GO" id="GO:0043737">
    <property type="term" value="F:deoxyribonuclease V activity"/>
    <property type="evidence" value="ECO:0007669"/>
    <property type="project" value="UniProtKB-UniRule"/>
</dbReference>
<dbReference type="GO" id="GO:0000287">
    <property type="term" value="F:magnesium ion binding"/>
    <property type="evidence" value="ECO:0007669"/>
    <property type="project" value="UniProtKB-UniRule"/>
</dbReference>
<dbReference type="GO" id="GO:0016891">
    <property type="term" value="F:RNA endonuclease activity, producing 5'-phosphomonoesters"/>
    <property type="evidence" value="ECO:0007669"/>
    <property type="project" value="TreeGrafter"/>
</dbReference>
<dbReference type="GO" id="GO:0003727">
    <property type="term" value="F:single-stranded RNA binding"/>
    <property type="evidence" value="ECO:0007669"/>
    <property type="project" value="TreeGrafter"/>
</dbReference>
<dbReference type="GO" id="GO:0006281">
    <property type="term" value="P:DNA repair"/>
    <property type="evidence" value="ECO:0007669"/>
    <property type="project" value="UniProtKB-UniRule"/>
</dbReference>
<dbReference type="CDD" id="cd06559">
    <property type="entry name" value="Endonuclease_V"/>
    <property type="match status" value="1"/>
</dbReference>
<dbReference type="Gene3D" id="3.30.2170.10">
    <property type="entry name" value="archaeoglobus fulgidus dsm 4304 superfamily"/>
    <property type="match status" value="1"/>
</dbReference>
<dbReference type="HAMAP" id="MF_00801">
    <property type="entry name" value="Endonuclease_5"/>
    <property type="match status" value="1"/>
</dbReference>
<dbReference type="InterPro" id="IPR007581">
    <property type="entry name" value="Endonuclease-V"/>
</dbReference>
<dbReference type="InterPro" id="IPR053396">
    <property type="entry name" value="Endonuclease_V-like"/>
</dbReference>
<dbReference type="NCBIfam" id="NF041102">
    <property type="entry name" value="endonuc_V_Ttgales"/>
    <property type="match status" value="1"/>
</dbReference>
<dbReference type="PANTHER" id="PTHR28511">
    <property type="entry name" value="ENDONUCLEASE V"/>
    <property type="match status" value="1"/>
</dbReference>
<dbReference type="PANTHER" id="PTHR28511:SF1">
    <property type="entry name" value="ENDONUCLEASE V"/>
    <property type="match status" value="1"/>
</dbReference>
<dbReference type="Pfam" id="PF04493">
    <property type="entry name" value="Endonuclease_5"/>
    <property type="match status" value="1"/>
</dbReference>
<proteinExistence type="inferred from homology"/>
<gene>
    <name evidence="1" type="primary">nfi</name>
    <name type="ordered locus">Tmel_1562</name>
</gene>
<reference key="1">
    <citation type="submission" date="2007-05" db="EMBL/GenBank/DDBJ databases">
        <title>Complete sequence of Thermosipho melanesiensis BI429.</title>
        <authorList>
            <consortium name="US DOE Joint Genome Institute"/>
            <person name="Copeland A."/>
            <person name="Lucas S."/>
            <person name="Lapidus A."/>
            <person name="Barry K."/>
            <person name="Glavina del Rio T."/>
            <person name="Dalin E."/>
            <person name="Tice H."/>
            <person name="Pitluck S."/>
            <person name="Chertkov O."/>
            <person name="Brettin T."/>
            <person name="Bruce D."/>
            <person name="Detter J.C."/>
            <person name="Han C."/>
            <person name="Schmutz J."/>
            <person name="Larimer F."/>
            <person name="Land M."/>
            <person name="Hauser L."/>
            <person name="Kyrpides N."/>
            <person name="Mikhailova N."/>
            <person name="Nelson K."/>
            <person name="Gogarten J.P."/>
            <person name="Noll K."/>
            <person name="Richardson P."/>
        </authorList>
    </citation>
    <scope>NUCLEOTIDE SEQUENCE [LARGE SCALE GENOMIC DNA]</scope>
    <source>
        <strain>DSM 12029 / CIP 104789 / BI429</strain>
    </source>
</reference>
<keyword id="KW-0963">Cytoplasm</keyword>
<keyword id="KW-0227">DNA damage</keyword>
<keyword id="KW-0234">DNA repair</keyword>
<keyword id="KW-0255">Endonuclease</keyword>
<keyword id="KW-0378">Hydrolase</keyword>
<keyword id="KW-0460">Magnesium</keyword>
<keyword id="KW-0479">Metal-binding</keyword>
<keyword id="KW-0540">Nuclease</keyword>
<feature type="chain" id="PRO_1000047004" description="Endonuclease V">
    <location>
        <begin position="1"/>
        <end position="226"/>
    </location>
</feature>
<feature type="binding site" evidence="1">
    <location>
        <position position="43"/>
    </location>
    <ligand>
        <name>Mg(2+)</name>
        <dbReference type="ChEBI" id="CHEBI:18420"/>
    </ligand>
</feature>
<feature type="binding site" evidence="1">
    <location>
        <position position="108"/>
    </location>
    <ligand>
        <name>Mg(2+)</name>
        <dbReference type="ChEBI" id="CHEBI:18420"/>
    </ligand>
</feature>
<feature type="site" description="Interaction with target DNA" evidence="1">
    <location>
        <position position="78"/>
    </location>
</feature>
<organism>
    <name type="scientific">Thermosipho melanesiensis (strain DSM 12029 / CIP 104789 / BI429)</name>
    <dbReference type="NCBI Taxonomy" id="391009"/>
    <lineage>
        <taxon>Bacteria</taxon>
        <taxon>Thermotogati</taxon>
        <taxon>Thermotogota</taxon>
        <taxon>Thermotogae</taxon>
        <taxon>Thermotogales</taxon>
        <taxon>Fervidobacteriaceae</taxon>
        <taxon>Thermosipho</taxon>
    </lineage>
</organism>
<evidence type="ECO:0000255" key="1">
    <source>
        <dbReference type="HAMAP-Rule" id="MF_00801"/>
    </source>
</evidence>
<sequence length="226" mass="26193">MEYKKLHSWKLIPEKAIELQKLLSKKLTFKPLSKEINLVAGVDLSFVKDYGLAVIVILDKNMELIKVYHHIEKITFPYIPGLLAFREGPIFLKAWKKVNHNVDVVFFDGHGISHPRSMGIASHMGLWIEQPTIGIAKKILFGNYVEPENKKFSFTYITYKNQKIGIVLRSRENVKPIFISPGNLITLDESLELTKQFITKYKLPEPTRLAHKYSQLLKKQFNEELQ</sequence>
<name>NFI_THEM4</name>
<accession>A6LNA6</accession>